<keyword id="KW-0066">ATP synthesis</keyword>
<keyword id="KW-0139">CF(1)</keyword>
<keyword id="KW-0375">Hydrogen ion transport</keyword>
<keyword id="KW-0406">Ion transport</keyword>
<keyword id="KW-0472">Membrane</keyword>
<keyword id="KW-1185">Reference proteome</keyword>
<keyword id="KW-0793">Thylakoid</keyword>
<keyword id="KW-0813">Transport</keyword>
<feature type="chain" id="PRO_1000056516" description="ATP synthase epsilon chain">
    <location>
        <begin position="1"/>
        <end position="134"/>
    </location>
</feature>
<comment type="function">
    <text evidence="1">Produces ATP from ADP in the presence of a proton gradient across the membrane.</text>
</comment>
<comment type="subunit">
    <text evidence="1">F-type ATPases have 2 components, CF(1) - the catalytic core - and CF(0) - the membrane proton channel. CF(1) has five subunits: alpha(3), beta(3), gamma(1), delta(1), epsilon(1). CF(0) has three main subunits: a, b and c.</text>
</comment>
<comment type="subcellular location">
    <subcellularLocation>
        <location evidence="1">Cellular thylakoid membrane</location>
        <topology evidence="1">Peripheral membrane protein</topology>
    </subcellularLocation>
</comment>
<comment type="similarity">
    <text evidence="1">Belongs to the ATPase epsilon chain family.</text>
</comment>
<gene>
    <name evidence="1" type="primary">atpC</name>
    <name type="ordered locus">P9301_16291</name>
</gene>
<protein>
    <recommendedName>
        <fullName evidence="1">ATP synthase epsilon chain</fullName>
    </recommendedName>
    <alternativeName>
        <fullName evidence="1">ATP synthase F1 sector epsilon subunit</fullName>
    </alternativeName>
    <alternativeName>
        <fullName evidence="1">F-ATPase epsilon subunit</fullName>
    </alternativeName>
</protein>
<reference key="1">
    <citation type="journal article" date="2007" name="PLoS Genet.">
        <title>Patterns and implications of gene gain and loss in the evolution of Prochlorococcus.</title>
        <authorList>
            <person name="Kettler G.C."/>
            <person name="Martiny A.C."/>
            <person name="Huang K."/>
            <person name="Zucker J."/>
            <person name="Coleman M.L."/>
            <person name="Rodrigue S."/>
            <person name="Chen F."/>
            <person name="Lapidus A."/>
            <person name="Ferriera S."/>
            <person name="Johnson J."/>
            <person name="Steglich C."/>
            <person name="Church G.M."/>
            <person name="Richardson P."/>
            <person name="Chisholm S.W."/>
        </authorList>
    </citation>
    <scope>NUCLEOTIDE SEQUENCE [LARGE SCALE GENOMIC DNA]</scope>
    <source>
        <strain>MIT 9301</strain>
    </source>
</reference>
<organism>
    <name type="scientific">Prochlorococcus marinus (strain MIT 9301)</name>
    <dbReference type="NCBI Taxonomy" id="167546"/>
    <lineage>
        <taxon>Bacteria</taxon>
        <taxon>Bacillati</taxon>
        <taxon>Cyanobacteriota</taxon>
        <taxon>Cyanophyceae</taxon>
        <taxon>Synechococcales</taxon>
        <taxon>Prochlorococcaceae</taxon>
        <taxon>Prochlorococcus</taxon>
    </lineage>
</organism>
<evidence type="ECO:0000255" key="1">
    <source>
        <dbReference type="HAMAP-Rule" id="MF_00530"/>
    </source>
</evidence>
<name>ATPE_PROM0</name>
<sequence length="134" mass="14521">MTISLKVLAPNKNVYQGEAEEVILPSTTGQLGILPGHISLVTAIDIGVLRVRINSQWKSIALMGGFAEIESDEVIVLVNNAEIGSEINVQNAEQDLKEAKLAISKFSENEKNPEKIKALKEVSKAEARIQAAKN</sequence>
<accession>A3PES7</accession>
<dbReference type="EMBL" id="CP000576">
    <property type="protein sequence ID" value="ABO18252.1"/>
    <property type="molecule type" value="Genomic_DNA"/>
</dbReference>
<dbReference type="RefSeq" id="WP_011863551.1">
    <property type="nucleotide sequence ID" value="NC_009091.1"/>
</dbReference>
<dbReference type="SMR" id="A3PES7"/>
<dbReference type="STRING" id="167546.P9301_16291"/>
<dbReference type="KEGG" id="pmg:P9301_16291"/>
<dbReference type="eggNOG" id="COG0355">
    <property type="taxonomic scope" value="Bacteria"/>
</dbReference>
<dbReference type="HOGENOM" id="CLU_084338_1_2_3"/>
<dbReference type="OrthoDB" id="9804110at2"/>
<dbReference type="Proteomes" id="UP000001430">
    <property type="component" value="Chromosome"/>
</dbReference>
<dbReference type="GO" id="GO:0031676">
    <property type="term" value="C:plasma membrane-derived thylakoid membrane"/>
    <property type="evidence" value="ECO:0007669"/>
    <property type="project" value="UniProtKB-SubCell"/>
</dbReference>
<dbReference type="GO" id="GO:0045259">
    <property type="term" value="C:proton-transporting ATP synthase complex"/>
    <property type="evidence" value="ECO:0007669"/>
    <property type="project" value="UniProtKB-KW"/>
</dbReference>
<dbReference type="GO" id="GO:0005524">
    <property type="term" value="F:ATP binding"/>
    <property type="evidence" value="ECO:0007669"/>
    <property type="project" value="UniProtKB-UniRule"/>
</dbReference>
<dbReference type="GO" id="GO:0046933">
    <property type="term" value="F:proton-transporting ATP synthase activity, rotational mechanism"/>
    <property type="evidence" value="ECO:0007669"/>
    <property type="project" value="UniProtKB-UniRule"/>
</dbReference>
<dbReference type="CDD" id="cd12152">
    <property type="entry name" value="F1-ATPase_delta"/>
    <property type="match status" value="1"/>
</dbReference>
<dbReference type="Gene3D" id="2.60.15.10">
    <property type="entry name" value="F0F1 ATP synthase delta/epsilon subunit, N-terminal"/>
    <property type="match status" value="1"/>
</dbReference>
<dbReference type="HAMAP" id="MF_00530">
    <property type="entry name" value="ATP_synth_epsil_bac"/>
    <property type="match status" value="1"/>
</dbReference>
<dbReference type="InterPro" id="IPR001469">
    <property type="entry name" value="ATP_synth_F1_dsu/esu"/>
</dbReference>
<dbReference type="InterPro" id="IPR020546">
    <property type="entry name" value="ATP_synth_F1_dsu/esu_N"/>
</dbReference>
<dbReference type="InterPro" id="IPR036771">
    <property type="entry name" value="ATPsynth_dsu/esu_N"/>
</dbReference>
<dbReference type="NCBIfam" id="TIGR01216">
    <property type="entry name" value="ATP_synt_epsi"/>
    <property type="match status" value="1"/>
</dbReference>
<dbReference type="PANTHER" id="PTHR13822">
    <property type="entry name" value="ATP SYNTHASE DELTA/EPSILON CHAIN"/>
    <property type="match status" value="1"/>
</dbReference>
<dbReference type="PANTHER" id="PTHR13822:SF10">
    <property type="entry name" value="ATP SYNTHASE EPSILON CHAIN, CHLOROPLASTIC"/>
    <property type="match status" value="1"/>
</dbReference>
<dbReference type="Pfam" id="PF02823">
    <property type="entry name" value="ATP-synt_DE_N"/>
    <property type="match status" value="1"/>
</dbReference>
<dbReference type="SUPFAM" id="SSF51344">
    <property type="entry name" value="Epsilon subunit of F1F0-ATP synthase N-terminal domain"/>
    <property type="match status" value="1"/>
</dbReference>
<proteinExistence type="inferred from homology"/>